<sequence length="352" mass="39271">MKKILFIDRDGTLVEEPFDFQVDSLDKIKLTSGVIPALLQLQKAGFTFIMVSNQNGIGTVAFPEEDFAVCHEFILDLFSSQGILFDEIFICPHTPENNCICRKPKTGLLEPYLKETVFAKQYSWVIGDRDTDKEFADNLGVNFLPISKTHTWEMVASAIINDARKASVQRKTKETTIDLSVQLDSDQTSVIDTPIPFFTHMLEQVAKHGGFDLRLQASGDLEVDEHHLIEDTAIALGEAIRTALGDKWGINRYGYTLPMDESLATIAIDISGRSFCDFKGQFTREFIGGMATEMIPHFFQSLSSALGATIHIEVTGTNHHHMIEACFKVLGRALRQACSRTNNYLPSTKGVL</sequence>
<name>HIS7_LEGPH</name>
<organism>
    <name type="scientific">Legionella pneumophila subsp. pneumophila (strain Philadelphia 1 / ATCC 33152 / DSM 7513)</name>
    <dbReference type="NCBI Taxonomy" id="272624"/>
    <lineage>
        <taxon>Bacteria</taxon>
        <taxon>Pseudomonadati</taxon>
        <taxon>Pseudomonadota</taxon>
        <taxon>Gammaproteobacteria</taxon>
        <taxon>Legionellales</taxon>
        <taxon>Legionellaceae</taxon>
        <taxon>Legionella</taxon>
    </lineage>
</organism>
<evidence type="ECO:0000255" key="1">
    <source>
        <dbReference type="HAMAP-Rule" id="MF_01022"/>
    </source>
</evidence>
<proteinExistence type="inferred from homology"/>
<keyword id="KW-0028">Amino-acid biosynthesis</keyword>
<keyword id="KW-0963">Cytoplasm</keyword>
<keyword id="KW-0368">Histidine biosynthesis</keyword>
<keyword id="KW-0378">Hydrolase</keyword>
<keyword id="KW-0456">Lyase</keyword>
<keyword id="KW-0460">Magnesium</keyword>
<keyword id="KW-0479">Metal-binding</keyword>
<keyword id="KW-0511">Multifunctional enzyme</keyword>
<keyword id="KW-1185">Reference proteome</keyword>
<keyword id="KW-0862">Zinc</keyword>
<protein>
    <recommendedName>
        <fullName evidence="1">Histidine biosynthesis bifunctional protein HisB</fullName>
    </recommendedName>
    <domain>
        <recommendedName>
            <fullName evidence="1">Histidinol-phosphatase</fullName>
            <ecNumber evidence="1">3.1.3.15</ecNumber>
        </recommendedName>
    </domain>
    <domain>
        <recommendedName>
            <fullName evidence="1">Imidazoleglycerol-phosphate dehydratase</fullName>
            <shortName evidence="1">IGPD</shortName>
            <ecNumber evidence="1">4.2.1.19</ecNumber>
        </recommendedName>
    </domain>
</protein>
<feature type="chain" id="PRO_0000158212" description="Histidine biosynthesis bifunctional protein HisB">
    <location>
        <begin position="1"/>
        <end position="352"/>
    </location>
</feature>
<feature type="region of interest" description="Histidinol-phosphatase" evidence="1">
    <location>
        <begin position="1"/>
        <end position="163"/>
    </location>
</feature>
<feature type="region of interest" description="Imidazoleglycerol-phosphate dehydratase" evidence="1">
    <location>
        <begin position="164"/>
        <end position="352"/>
    </location>
</feature>
<feature type="active site" description="Nucleophile" evidence="1">
    <location>
        <position position="8"/>
    </location>
</feature>
<feature type="active site" description="Proton donor" evidence="1">
    <location>
        <position position="10"/>
    </location>
</feature>
<feature type="binding site" evidence="1">
    <location>
        <position position="8"/>
    </location>
    <ligand>
        <name>Mg(2+)</name>
        <dbReference type="ChEBI" id="CHEBI:18420"/>
    </ligand>
</feature>
<feature type="binding site" evidence="1">
    <location>
        <position position="10"/>
    </location>
    <ligand>
        <name>Mg(2+)</name>
        <dbReference type="ChEBI" id="CHEBI:18420"/>
    </ligand>
</feature>
<feature type="binding site" evidence="1">
    <location>
        <position position="91"/>
    </location>
    <ligand>
        <name>Zn(2+)</name>
        <dbReference type="ChEBI" id="CHEBI:29105"/>
    </ligand>
</feature>
<feature type="binding site" evidence="1">
    <location>
        <position position="93"/>
    </location>
    <ligand>
        <name>Zn(2+)</name>
        <dbReference type="ChEBI" id="CHEBI:29105"/>
    </ligand>
</feature>
<feature type="binding site" evidence="1">
    <location>
        <position position="99"/>
    </location>
    <ligand>
        <name>Zn(2+)</name>
        <dbReference type="ChEBI" id="CHEBI:29105"/>
    </ligand>
</feature>
<feature type="binding site" evidence="1">
    <location>
        <position position="101"/>
    </location>
    <ligand>
        <name>Zn(2+)</name>
        <dbReference type="ChEBI" id="CHEBI:29105"/>
    </ligand>
</feature>
<feature type="binding site" evidence="1">
    <location>
        <position position="128"/>
    </location>
    <ligand>
        <name>Mg(2+)</name>
        <dbReference type="ChEBI" id="CHEBI:18420"/>
    </ligand>
</feature>
<comment type="catalytic activity">
    <reaction evidence="1">
        <text>D-erythro-1-(imidazol-4-yl)glycerol 3-phosphate = 3-(imidazol-4-yl)-2-oxopropyl phosphate + H2O</text>
        <dbReference type="Rhea" id="RHEA:11040"/>
        <dbReference type="ChEBI" id="CHEBI:15377"/>
        <dbReference type="ChEBI" id="CHEBI:57766"/>
        <dbReference type="ChEBI" id="CHEBI:58278"/>
        <dbReference type="EC" id="4.2.1.19"/>
    </reaction>
</comment>
<comment type="catalytic activity">
    <reaction evidence="1">
        <text>L-histidinol phosphate + H2O = L-histidinol + phosphate</text>
        <dbReference type="Rhea" id="RHEA:14465"/>
        <dbReference type="ChEBI" id="CHEBI:15377"/>
        <dbReference type="ChEBI" id="CHEBI:43474"/>
        <dbReference type="ChEBI" id="CHEBI:57699"/>
        <dbReference type="ChEBI" id="CHEBI:57980"/>
        <dbReference type="EC" id="3.1.3.15"/>
    </reaction>
</comment>
<comment type="cofactor">
    <cofactor evidence="1">
        <name>Mg(2+)</name>
        <dbReference type="ChEBI" id="CHEBI:18420"/>
    </cofactor>
</comment>
<comment type="cofactor">
    <cofactor evidence="1">
        <name>Zn(2+)</name>
        <dbReference type="ChEBI" id="CHEBI:29105"/>
    </cofactor>
</comment>
<comment type="pathway">
    <text evidence="1">Amino-acid biosynthesis; L-histidine biosynthesis; L-histidine from 5-phospho-alpha-D-ribose 1-diphosphate: step 6/9.</text>
</comment>
<comment type="pathway">
    <text evidence="1">Amino-acid biosynthesis; L-histidine biosynthesis; L-histidine from 5-phospho-alpha-D-ribose 1-diphosphate: step 8/9.</text>
</comment>
<comment type="subcellular location">
    <subcellularLocation>
        <location evidence="1">Cytoplasm</location>
    </subcellularLocation>
</comment>
<comment type="similarity">
    <text evidence="1">In the N-terminal section; belongs to the histidinol-phosphatase family.</text>
</comment>
<comment type="similarity">
    <text evidence="1">In the C-terminal section; belongs to the imidazoleglycerol-phosphate dehydratase family.</text>
</comment>
<gene>
    <name evidence="1" type="primary">hisB</name>
    <name type="ordered locus">lpg1197</name>
</gene>
<reference key="1">
    <citation type="journal article" date="2004" name="Science">
        <title>The genomic sequence of the accidental pathogen Legionella pneumophila.</title>
        <authorList>
            <person name="Chien M."/>
            <person name="Morozova I."/>
            <person name="Shi S."/>
            <person name="Sheng H."/>
            <person name="Chen J."/>
            <person name="Gomez S.M."/>
            <person name="Asamani G."/>
            <person name="Hill K."/>
            <person name="Nuara J."/>
            <person name="Feder M."/>
            <person name="Rineer J."/>
            <person name="Greenberg J.J."/>
            <person name="Steshenko V."/>
            <person name="Park S.H."/>
            <person name="Zhao B."/>
            <person name="Teplitskaya E."/>
            <person name="Edwards J.R."/>
            <person name="Pampou S."/>
            <person name="Georghiou A."/>
            <person name="Chou I.-C."/>
            <person name="Iannuccilli W."/>
            <person name="Ulz M.E."/>
            <person name="Kim D.H."/>
            <person name="Geringer-Sameth A."/>
            <person name="Goldsberry C."/>
            <person name="Morozov P."/>
            <person name="Fischer S.G."/>
            <person name="Segal G."/>
            <person name="Qu X."/>
            <person name="Rzhetsky A."/>
            <person name="Zhang P."/>
            <person name="Cayanis E."/>
            <person name="De Jong P.J."/>
            <person name="Ju J."/>
            <person name="Kalachikov S."/>
            <person name="Shuman H.A."/>
            <person name="Russo J.J."/>
        </authorList>
    </citation>
    <scope>NUCLEOTIDE SEQUENCE [LARGE SCALE GENOMIC DNA]</scope>
    <source>
        <strain>Philadelphia 1 / ATCC 33152 / DSM 7513</strain>
    </source>
</reference>
<accession>Q5ZW89</accession>
<dbReference type="EC" id="3.1.3.15" evidence="1"/>
<dbReference type="EC" id="4.2.1.19" evidence="1"/>
<dbReference type="EMBL" id="AE017354">
    <property type="protein sequence ID" value="AAU27282.1"/>
    <property type="molecule type" value="Genomic_DNA"/>
</dbReference>
<dbReference type="RefSeq" id="WP_010946930.1">
    <property type="nucleotide sequence ID" value="NC_002942.5"/>
</dbReference>
<dbReference type="RefSeq" id="YP_095229.1">
    <property type="nucleotide sequence ID" value="NC_002942.5"/>
</dbReference>
<dbReference type="SMR" id="Q5ZW89"/>
<dbReference type="STRING" id="272624.lpg1197"/>
<dbReference type="PaxDb" id="272624-lpg1197"/>
<dbReference type="GeneID" id="57035187"/>
<dbReference type="KEGG" id="lpn:lpg1197"/>
<dbReference type="PATRIC" id="fig|272624.6.peg.1259"/>
<dbReference type="eggNOG" id="COG0131">
    <property type="taxonomic scope" value="Bacteria"/>
</dbReference>
<dbReference type="eggNOG" id="COG0241">
    <property type="taxonomic scope" value="Bacteria"/>
</dbReference>
<dbReference type="HOGENOM" id="CLU_044308_0_0_6"/>
<dbReference type="OrthoDB" id="9790411at2"/>
<dbReference type="UniPathway" id="UPA00031">
    <property type="reaction ID" value="UER00011"/>
</dbReference>
<dbReference type="UniPathway" id="UPA00031">
    <property type="reaction ID" value="UER00013"/>
</dbReference>
<dbReference type="Proteomes" id="UP000000609">
    <property type="component" value="Chromosome"/>
</dbReference>
<dbReference type="GO" id="GO:0005737">
    <property type="term" value="C:cytoplasm"/>
    <property type="evidence" value="ECO:0007669"/>
    <property type="project" value="UniProtKB-SubCell"/>
</dbReference>
<dbReference type="GO" id="GO:0004401">
    <property type="term" value="F:histidinol-phosphatase activity"/>
    <property type="evidence" value="ECO:0007669"/>
    <property type="project" value="UniProtKB-UniRule"/>
</dbReference>
<dbReference type="GO" id="GO:0004424">
    <property type="term" value="F:imidazoleglycerol-phosphate dehydratase activity"/>
    <property type="evidence" value="ECO:0007669"/>
    <property type="project" value="UniProtKB-UniRule"/>
</dbReference>
<dbReference type="GO" id="GO:0046872">
    <property type="term" value="F:metal ion binding"/>
    <property type="evidence" value="ECO:0007669"/>
    <property type="project" value="UniProtKB-KW"/>
</dbReference>
<dbReference type="GO" id="GO:0000105">
    <property type="term" value="P:L-histidine biosynthetic process"/>
    <property type="evidence" value="ECO:0007669"/>
    <property type="project" value="UniProtKB-UniRule"/>
</dbReference>
<dbReference type="CDD" id="cd07503">
    <property type="entry name" value="HAD_HisB-N"/>
    <property type="match status" value="1"/>
</dbReference>
<dbReference type="CDD" id="cd07914">
    <property type="entry name" value="IGPD"/>
    <property type="match status" value="1"/>
</dbReference>
<dbReference type="FunFam" id="3.30.230.40:FF:000001">
    <property type="entry name" value="Imidazoleglycerol-phosphate dehydratase HisB"/>
    <property type="match status" value="1"/>
</dbReference>
<dbReference type="FunFam" id="3.30.230.40:FF:000003">
    <property type="entry name" value="Imidazoleglycerol-phosphate dehydratase HisB"/>
    <property type="match status" value="1"/>
</dbReference>
<dbReference type="Gene3D" id="3.40.50.1000">
    <property type="entry name" value="HAD superfamily/HAD-like"/>
    <property type="match status" value="1"/>
</dbReference>
<dbReference type="Gene3D" id="3.30.230.40">
    <property type="entry name" value="Imidazole glycerol phosphate dehydratase, domain 1"/>
    <property type="match status" value="2"/>
</dbReference>
<dbReference type="HAMAP" id="MF_01022">
    <property type="entry name" value="Bifunc_HisB"/>
    <property type="match status" value="1"/>
</dbReference>
<dbReference type="HAMAP" id="MF_00076">
    <property type="entry name" value="HisB"/>
    <property type="match status" value="1"/>
</dbReference>
<dbReference type="InterPro" id="IPR036412">
    <property type="entry name" value="HAD-like_sf"/>
</dbReference>
<dbReference type="InterPro" id="IPR006549">
    <property type="entry name" value="HAD-SF_hydro_IIIA"/>
</dbReference>
<dbReference type="InterPro" id="IPR023214">
    <property type="entry name" value="HAD_sf"/>
</dbReference>
<dbReference type="InterPro" id="IPR020566">
    <property type="entry name" value="His_synth_bifunc_HisB"/>
</dbReference>
<dbReference type="InterPro" id="IPR005954">
    <property type="entry name" value="HisB_N"/>
</dbReference>
<dbReference type="InterPro" id="IPR006543">
    <property type="entry name" value="Histidinol-phos"/>
</dbReference>
<dbReference type="InterPro" id="IPR038494">
    <property type="entry name" value="IGPD_sf"/>
</dbReference>
<dbReference type="InterPro" id="IPR000807">
    <property type="entry name" value="ImidazoleglycerolP_deHydtase"/>
</dbReference>
<dbReference type="InterPro" id="IPR020565">
    <property type="entry name" value="ImidazoleglycerP_deHydtase_CS"/>
</dbReference>
<dbReference type="InterPro" id="IPR020568">
    <property type="entry name" value="Ribosomal_Su5_D2-typ_SF"/>
</dbReference>
<dbReference type="NCBIfam" id="TIGR01662">
    <property type="entry name" value="HAD-SF-IIIA"/>
    <property type="match status" value="1"/>
</dbReference>
<dbReference type="NCBIfam" id="TIGR01261">
    <property type="entry name" value="hisB_Nterm"/>
    <property type="match status" value="1"/>
</dbReference>
<dbReference type="NCBIfam" id="TIGR01656">
    <property type="entry name" value="Histidinol-ppas"/>
    <property type="match status" value="1"/>
</dbReference>
<dbReference type="NCBIfam" id="NF002111">
    <property type="entry name" value="PRK00951.2-1"/>
    <property type="match status" value="1"/>
</dbReference>
<dbReference type="NCBIfam" id="NF002114">
    <property type="entry name" value="PRK00951.2-4"/>
    <property type="match status" value="1"/>
</dbReference>
<dbReference type="NCBIfam" id="NF003937">
    <property type="entry name" value="PRK05446.1"/>
    <property type="match status" value="1"/>
</dbReference>
<dbReference type="PANTHER" id="PTHR23133:SF2">
    <property type="entry name" value="IMIDAZOLEGLYCEROL-PHOSPHATE DEHYDRATASE"/>
    <property type="match status" value="1"/>
</dbReference>
<dbReference type="PANTHER" id="PTHR23133">
    <property type="entry name" value="IMIDAZOLEGLYCEROL-PHOSPHATE DEHYDRATASE HIS7"/>
    <property type="match status" value="1"/>
</dbReference>
<dbReference type="Pfam" id="PF13242">
    <property type="entry name" value="Hydrolase_like"/>
    <property type="match status" value="1"/>
</dbReference>
<dbReference type="Pfam" id="PF00475">
    <property type="entry name" value="IGPD"/>
    <property type="match status" value="1"/>
</dbReference>
<dbReference type="SUPFAM" id="SSF56784">
    <property type="entry name" value="HAD-like"/>
    <property type="match status" value="1"/>
</dbReference>
<dbReference type="SUPFAM" id="SSF54211">
    <property type="entry name" value="Ribosomal protein S5 domain 2-like"/>
    <property type="match status" value="2"/>
</dbReference>
<dbReference type="PROSITE" id="PS00954">
    <property type="entry name" value="IGP_DEHYDRATASE_1"/>
    <property type="match status" value="1"/>
</dbReference>
<dbReference type="PROSITE" id="PS00955">
    <property type="entry name" value="IGP_DEHYDRATASE_2"/>
    <property type="match status" value="1"/>
</dbReference>